<evidence type="ECO:0000255" key="1">
    <source>
        <dbReference type="HAMAP-Rule" id="MF_00468"/>
    </source>
</evidence>
<keyword id="KW-0028">Amino-acid biosynthesis</keyword>
<keyword id="KW-0997">Cell inner membrane</keyword>
<keyword id="KW-1003">Cell membrane</keyword>
<keyword id="KW-0198">Cysteine biosynthesis</keyword>
<keyword id="KW-0472">Membrane</keyword>
<keyword id="KW-0764">Sulfate transport</keyword>
<keyword id="KW-0812">Transmembrane</keyword>
<keyword id="KW-1133">Transmembrane helix</keyword>
<keyword id="KW-0813">Transport</keyword>
<sequence length="246" mass="27936">MPALSGPQYLGEGLKLIMRPGLRLFVLIPLTLNLLVFALLIGFAMQQFSHWVDLLMPSLPDWLSFLQYIVWPLFVLLVLVIVFFTFTMVANIISAPFNGFLSEKVEVVVRGRDDFPPFSWAELLAMIPRTMGREMRKLAYFLPRALVLLVLSFVPGVNLIATPLWILFGIWMMAVQYIDYPADNHKLGWNEMLAWLRSKRWACMGFGGVTYLALLIPLVNLVMMPAAVAGATLFWVREEGEKALVK</sequence>
<accession>B7UY90</accession>
<proteinExistence type="inferred from homology"/>
<reference key="1">
    <citation type="journal article" date="2009" name="Genome Res.">
        <title>Newly introduced genomic prophage islands are critical determinants of in vivo competitiveness in the Liverpool epidemic strain of Pseudomonas aeruginosa.</title>
        <authorList>
            <person name="Winstanley C."/>
            <person name="Langille M.G.I."/>
            <person name="Fothergill J.L."/>
            <person name="Kukavica-Ibrulj I."/>
            <person name="Paradis-Bleau C."/>
            <person name="Sanschagrin F."/>
            <person name="Thomson N.R."/>
            <person name="Winsor G.L."/>
            <person name="Quail M.A."/>
            <person name="Lennard N."/>
            <person name="Bignell A."/>
            <person name="Clarke L."/>
            <person name="Seeger K."/>
            <person name="Saunders D."/>
            <person name="Harris D."/>
            <person name="Parkhill J."/>
            <person name="Hancock R.E.W."/>
            <person name="Brinkman F.S.L."/>
            <person name="Levesque R.C."/>
        </authorList>
    </citation>
    <scope>NUCLEOTIDE SEQUENCE [LARGE SCALE GENOMIC DNA]</scope>
    <source>
        <strain>LESB58</strain>
    </source>
</reference>
<organism>
    <name type="scientific">Pseudomonas aeruginosa (strain LESB58)</name>
    <dbReference type="NCBI Taxonomy" id="557722"/>
    <lineage>
        <taxon>Bacteria</taxon>
        <taxon>Pseudomonadati</taxon>
        <taxon>Pseudomonadota</taxon>
        <taxon>Gammaproteobacteria</taxon>
        <taxon>Pseudomonadales</taxon>
        <taxon>Pseudomonadaceae</taxon>
        <taxon>Pseudomonas</taxon>
    </lineage>
</organism>
<gene>
    <name evidence="1" type="primary">cysZ</name>
    <name type="ordered locus">PLES_44721</name>
</gene>
<protein>
    <recommendedName>
        <fullName evidence="1">Sulfate transporter CysZ</fullName>
    </recommendedName>
</protein>
<dbReference type="EMBL" id="FM209186">
    <property type="protein sequence ID" value="CAW29227.1"/>
    <property type="molecule type" value="Genomic_DNA"/>
</dbReference>
<dbReference type="RefSeq" id="WP_003116482.1">
    <property type="nucleotide sequence ID" value="NC_011770.1"/>
</dbReference>
<dbReference type="SMR" id="B7UY90"/>
<dbReference type="KEGG" id="pag:PLES_44721"/>
<dbReference type="HOGENOM" id="CLU_070331_1_0_6"/>
<dbReference type="GO" id="GO:0005886">
    <property type="term" value="C:plasma membrane"/>
    <property type="evidence" value="ECO:0007669"/>
    <property type="project" value="UniProtKB-SubCell"/>
</dbReference>
<dbReference type="GO" id="GO:0009675">
    <property type="term" value="F:high-affinity sulfate:proton symporter activity"/>
    <property type="evidence" value="ECO:0007669"/>
    <property type="project" value="TreeGrafter"/>
</dbReference>
<dbReference type="GO" id="GO:0019344">
    <property type="term" value="P:cysteine biosynthetic process"/>
    <property type="evidence" value="ECO:0007669"/>
    <property type="project" value="UniProtKB-UniRule"/>
</dbReference>
<dbReference type="GO" id="GO:0000103">
    <property type="term" value="P:sulfate assimilation"/>
    <property type="evidence" value="ECO:0007669"/>
    <property type="project" value="InterPro"/>
</dbReference>
<dbReference type="HAMAP" id="MF_00468">
    <property type="entry name" value="CysZ"/>
    <property type="match status" value="1"/>
</dbReference>
<dbReference type="InterPro" id="IPR050480">
    <property type="entry name" value="CysZ_sulfate_transptr"/>
</dbReference>
<dbReference type="InterPro" id="IPR022985">
    <property type="entry name" value="Sulfate_CysZ"/>
</dbReference>
<dbReference type="NCBIfam" id="NF003433">
    <property type="entry name" value="PRK04949.1"/>
    <property type="match status" value="1"/>
</dbReference>
<dbReference type="PANTHER" id="PTHR37468">
    <property type="entry name" value="SULFATE TRANSPORTER CYSZ"/>
    <property type="match status" value="1"/>
</dbReference>
<dbReference type="PANTHER" id="PTHR37468:SF1">
    <property type="entry name" value="SULFATE TRANSPORTER CYSZ"/>
    <property type="match status" value="1"/>
</dbReference>
<dbReference type="Pfam" id="PF07264">
    <property type="entry name" value="EI24"/>
    <property type="match status" value="1"/>
</dbReference>
<comment type="function">
    <text evidence="1">High affinity, high specificity proton-dependent sulfate transporter, which mediates sulfate uptake. Provides the sulfur source for the cysteine synthesis pathway.</text>
</comment>
<comment type="subcellular location">
    <subcellularLocation>
        <location evidence="1">Cell inner membrane</location>
        <topology evidence="1">Multi-pass membrane protein</topology>
    </subcellularLocation>
</comment>
<comment type="similarity">
    <text evidence="1">Belongs to the CysZ family.</text>
</comment>
<name>CYSZ_PSEA8</name>
<feature type="chain" id="PRO_1000125501" description="Sulfate transporter CysZ">
    <location>
        <begin position="1"/>
        <end position="246"/>
    </location>
</feature>
<feature type="transmembrane region" description="Helical" evidence="1">
    <location>
        <begin position="24"/>
        <end position="44"/>
    </location>
</feature>
<feature type="transmembrane region" description="Helical" evidence="1">
    <location>
        <begin position="69"/>
        <end position="89"/>
    </location>
</feature>
<feature type="transmembrane region" description="Helical" evidence="1">
    <location>
        <begin position="148"/>
        <end position="168"/>
    </location>
</feature>
<feature type="transmembrane region" description="Helical" evidence="1">
    <location>
        <begin position="214"/>
        <end position="234"/>
    </location>
</feature>